<protein>
    <recommendedName>
        <fullName>Periviscerokinin-1</fullName>
        <shortName>PVK-1</shortName>
    </recommendedName>
</protein>
<comment type="function">
    <text evidence="1">Mediates visceral muscle contractile activity (myotropic activity).</text>
</comment>
<comment type="subcellular location">
    <subcellularLocation>
        <location>Secreted</location>
    </subcellularLocation>
</comment>
<comment type="mass spectrometry" mass="1090.6" method="MALDI" evidence="1"/>
<comment type="similarity">
    <text evidence="2">Belongs to the periviscerokinin family.</text>
</comment>
<keyword id="KW-0027">Amidation</keyword>
<keyword id="KW-0903">Direct protein sequencing</keyword>
<keyword id="KW-0527">Neuropeptide</keyword>
<keyword id="KW-0964">Secreted</keyword>
<organism>
    <name type="scientific">Nauphoeta cinerea</name>
    <name type="common">Cinereous cockroach</name>
    <name type="synonym">Gray cockroach</name>
    <dbReference type="NCBI Taxonomy" id="6990"/>
    <lineage>
        <taxon>Eukaryota</taxon>
        <taxon>Metazoa</taxon>
        <taxon>Ecdysozoa</taxon>
        <taxon>Arthropoda</taxon>
        <taxon>Hexapoda</taxon>
        <taxon>Insecta</taxon>
        <taxon>Pterygota</taxon>
        <taxon>Neoptera</taxon>
        <taxon>Polyneoptera</taxon>
        <taxon>Dictyoptera</taxon>
        <taxon>Blattodea</taxon>
        <taxon>Blaberoidea</taxon>
        <taxon>Blaberidae</taxon>
        <taxon>Oxyhaloinae</taxon>
        <taxon>Nauphoeta</taxon>
    </lineage>
</organism>
<feature type="peptide" id="PRO_0000044248" description="Periviscerokinin-1">
    <location>
        <begin position="1"/>
        <end position="11"/>
    </location>
</feature>
<feature type="modified residue" description="Threonine amide" evidence="1">
    <location>
        <position position="11"/>
    </location>
</feature>
<dbReference type="GO" id="GO:0005576">
    <property type="term" value="C:extracellular region"/>
    <property type="evidence" value="ECO:0007669"/>
    <property type="project" value="UniProtKB-SubCell"/>
</dbReference>
<dbReference type="GO" id="GO:0007218">
    <property type="term" value="P:neuropeptide signaling pathway"/>
    <property type="evidence" value="ECO:0007669"/>
    <property type="project" value="UniProtKB-KW"/>
</dbReference>
<dbReference type="InterPro" id="IPR013231">
    <property type="entry name" value="Periviscerokinin"/>
</dbReference>
<dbReference type="Pfam" id="PF08259">
    <property type="entry name" value="Periviscerokin"/>
    <property type="match status" value="1"/>
</dbReference>
<proteinExistence type="evidence at protein level"/>
<reference key="1">
    <citation type="journal article" date="2000" name="Eur. J. Biochem.">
        <title>Identification of novel periviscerokinins from single neurohaemal release sites in insects. MS/MS fragmentation complemented by Edman degradation.</title>
        <authorList>
            <person name="Predel R."/>
            <person name="Kellner R."/>
            <person name="Baggerman G."/>
            <person name="Steinmetzer T."/>
            <person name="Schoofs L."/>
        </authorList>
    </citation>
    <scope>PROTEIN SEQUENCE</scope>
    <scope>FUNCTION</scope>
    <scope>MASS SPECTROMETRY</scope>
    <scope>AMIDATION AT THR-11</scope>
    <source>
        <tissue>Abdominal perisympathetic organs</tissue>
    </source>
</reference>
<name>PVK1_NAUCI</name>
<sequence length="11" mass="1091">GSSGLIPFGRT</sequence>
<accession>P83922</accession>
<accession>P82698</accession>
<evidence type="ECO:0000269" key="1">
    <source>
    </source>
</evidence>
<evidence type="ECO:0000305" key="2"/>